<keyword id="KW-0240">DNA-directed RNA polymerase</keyword>
<keyword id="KW-0548">Nucleotidyltransferase</keyword>
<keyword id="KW-0804">Transcription</keyword>
<keyword id="KW-0808">Transferase</keyword>
<proteinExistence type="inferred from homology"/>
<dbReference type="EC" id="2.7.7.6" evidence="1"/>
<dbReference type="EMBL" id="CP000469">
    <property type="protein sequence ID" value="ABK50029.1"/>
    <property type="molecule type" value="Genomic_DNA"/>
</dbReference>
<dbReference type="RefSeq" id="WP_011624339.1">
    <property type="nucleotide sequence ID" value="NC_008577.1"/>
</dbReference>
<dbReference type="SMR" id="A0L1W0"/>
<dbReference type="STRING" id="94122.Shewana3_3811"/>
<dbReference type="GeneID" id="94729735"/>
<dbReference type="KEGG" id="shn:Shewana3_3811"/>
<dbReference type="eggNOG" id="COG1758">
    <property type="taxonomic scope" value="Bacteria"/>
</dbReference>
<dbReference type="HOGENOM" id="CLU_125406_5_3_6"/>
<dbReference type="OrthoDB" id="9796300at2"/>
<dbReference type="Proteomes" id="UP000002589">
    <property type="component" value="Chromosome"/>
</dbReference>
<dbReference type="GO" id="GO:0000428">
    <property type="term" value="C:DNA-directed RNA polymerase complex"/>
    <property type="evidence" value="ECO:0007669"/>
    <property type="project" value="UniProtKB-KW"/>
</dbReference>
<dbReference type="GO" id="GO:0003677">
    <property type="term" value="F:DNA binding"/>
    <property type="evidence" value="ECO:0007669"/>
    <property type="project" value="UniProtKB-UniRule"/>
</dbReference>
<dbReference type="GO" id="GO:0003899">
    <property type="term" value="F:DNA-directed RNA polymerase activity"/>
    <property type="evidence" value="ECO:0007669"/>
    <property type="project" value="UniProtKB-UniRule"/>
</dbReference>
<dbReference type="GO" id="GO:0006351">
    <property type="term" value="P:DNA-templated transcription"/>
    <property type="evidence" value="ECO:0007669"/>
    <property type="project" value="UniProtKB-UniRule"/>
</dbReference>
<dbReference type="Gene3D" id="3.90.940.10">
    <property type="match status" value="1"/>
</dbReference>
<dbReference type="HAMAP" id="MF_00366">
    <property type="entry name" value="RNApol_bact_RpoZ"/>
    <property type="match status" value="1"/>
</dbReference>
<dbReference type="InterPro" id="IPR003716">
    <property type="entry name" value="DNA-dir_RNA_pol_omega"/>
</dbReference>
<dbReference type="InterPro" id="IPR006110">
    <property type="entry name" value="Pol_omega/Rpo6/RPB6"/>
</dbReference>
<dbReference type="InterPro" id="IPR036161">
    <property type="entry name" value="RPB6/omega-like_sf"/>
</dbReference>
<dbReference type="NCBIfam" id="TIGR00690">
    <property type="entry name" value="rpoZ"/>
    <property type="match status" value="1"/>
</dbReference>
<dbReference type="PANTHER" id="PTHR34476">
    <property type="entry name" value="DNA-DIRECTED RNA POLYMERASE SUBUNIT OMEGA"/>
    <property type="match status" value="1"/>
</dbReference>
<dbReference type="PANTHER" id="PTHR34476:SF1">
    <property type="entry name" value="DNA-DIRECTED RNA POLYMERASE SUBUNIT OMEGA"/>
    <property type="match status" value="1"/>
</dbReference>
<dbReference type="Pfam" id="PF01192">
    <property type="entry name" value="RNA_pol_Rpb6"/>
    <property type="match status" value="1"/>
</dbReference>
<dbReference type="SMART" id="SM01409">
    <property type="entry name" value="RNA_pol_Rpb6"/>
    <property type="match status" value="1"/>
</dbReference>
<dbReference type="SUPFAM" id="SSF63562">
    <property type="entry name" value="RPB6/omega subunit-like"/>
    <property type="match status" value="1"/>
</dbReference>
<protein>
    <recommendedName>
        <fullName evidence="1">DNA-directed RNA polymerase subunit omega</fullName>
        <shortName evidence="1">RNAP omega subunit</shortName>
        <ecNumber evidence="1">2.7.7.6</ecNumber>
    </recommendedName>
    <alternativeName>
        <fullName evidence="1">RNA polymerase omega subunit</fullName>
    </alternativeName>
    <alternativeName>
        <fullName evidence="1">Transcriptase subunit omega</fullName>
    </alternativeName>
</protein>
<reference key="1">
    <citation type="submission" date="2006-09" db="EMBL/GenBank/DDBJ databases">
        <title>Complete sequence of chromosome 1 of Shewanella sp. ANA-3.</title>
        <authorList>
            <person name="Copeland A."/>
            <person name="Lucas S."/>
            <person name="Lapidus A."/>
            <person name="Barry K."/>
            <person name="Detter J.C."/>
            <person name="Glavina del Rio T."/>
            <person name="Hammon N."/>
            <person name="Israni S."/>
            <person name="Dalin E."/>
            <person name="Tice H."/>
            <person name="Pitluck S."/>
            <person name="Chertkov O."/>
            <person name="Brettin T."/>
            <person name="Bruce D."/>
            <person name="Han C."/>
            <person name="Tapia R."/>
            <person name="Gilna P."/>
            <person name="Schmutz J."/>
            <person name="Larimer F."/>
            <person name="Land M."/>
            <person name="Hauser L."/>
            <person name="Kyrpides N."/>
            <person name="Kim E."/>
            <person name="Newman D."/>
            <person name="Salticov C."/>
            <person name="Konstantinidis K."/>
            <person name="Klappenback J."/>
            <person name="Tiedje J."/>
            <person name="Richardson P."/>
        </authorList>
    </citation>
    <scope>NUCLEOTIDE SEQUENCE [LARGE SCALE GENOMIC DNA]</scope>
    <source>
        <strain>ANA-3</strain>
    </source>
</reference>
<feature type="chain" id="PRO_1000006013" description="DNA-directed RNA polymerase subunit omega">
    <location>
        <begin position="1"/>
        <end position="92"/>
    </location>
</feature>
<gene>
    <name evidence="1" type="primary">rpoZ</name>
    <name type="ordered locus">Shewana3_3811</name>
</gene>
<evidence type="ECO:0000255" key="1">
    <source>
        <dbReference type="HAMAP-Rule" id="MF_00366"/>
    </source>
</evidence>
<accession>A0L1W0</accession>
<sequence>MARVTVEDAVEQIGNRFDMILVAARRARQIAVQGKDPMVEEMNDKPTVIALREIELGLVNAHTLDADERQSVREREAAEIAAVAAIAEGRSL</sequence>
<organism>
    <name type="scientific">Shewanella sp. (strain ANA-3)</name>
    <dbReference type="NCBI Taxonomy" id="94122"/>
    <lineage>
        <taxon>Bacteria</taxon>
        <taxon>Pseudomonadati</taxon>
        <taxon>Pseudomonadota</taxon>
        <taxon>Gammaproteobacteria</taxon>
        <taxon>Alteromonadales</taxon>
        <taxon>Shewanellaceae</taxon>
        <taxon>Shewanella</taxon>
    </lineage>
</organism>
<name>RPOZ_SHESA</name>
<comment type="function">
    <text evidence="1">Promotes RNA polymerase assembly. Latches the N- and C-terminal regions of the beta' subunit thereby facilitating its interaction with the beta and alpha subunits.</text>
</comment>
<comment type="catalytic activity">
    <reaction evidence="1">
        <text>RNA(n) + a ribonucleoside 5'-triphosphate = RNA(n+1) + diphosphate</text>
        <dbReference type="Rhea" id="RHEA:21248"/>
        <dbReference type="Rhea" id="RHEA-COMP:14527"/>
        <dbReference type="Rhea" id="RHEA-COMP:17342"/>
        <dbReference type="ChEBI" id="CHEBI:33019"/>
        <dbReference type="ChEBI" id="CHEBI:61557"/>
        <dbReference type="ChEBI" id="CHEBI:140395"/>
        <dbReference type="EC" id="2.7.7.6"/>
    </reaction>
</comment>
<comment type="subunit">
    <text evidence="1">The RNAP catalytic core consists of 2 alpha, 1 beta, 1 beta' and 1 omega subunit. When a sigma factor is associated with the core the holoenzyme is formed, which can initiate transcription.</text>
</comment>
<comment type="similarity">
    <text evidence="1">Belongs to the RNA polymerase subunit omega family.</text>
</comment>